<gene>
    <name type="primary">hemB</name>
    <name type="ordered locus">SAOUHSC_01772</name>
</gene>
<proteinExistence type="inferred from homology"/>
<reference key="1">
    <citation type="journal article" date="1997" name="Gene">
        <title>Isolation of the Staphylococcus aureus hemCDBL gene cluster coding for early steps in heme biosynthesis.</title>
        <authorList>
            <person name="Kafala B."/>
            <person name="Sasarman A."/>
        </authorList>
    </citation>
    <scope>NUCLEOTIDE SEQUENCE [GENOMIC DNA]</scope>
</reference>
<reference key="2">
    <citation type="book" date="2006" name="Gram positive pathogens, 2nd edition">
        <title>The Staphylococcus aureus NCTC 8325 genome.</title>
        <editorList>
            <person name="Fischetti V."/>
            <person name="Novick R."/>
            <person name="Ferretti J."/>
            <person name="Portnoy D."/>
            <person name="Rood J."/>
        </editorList>
        <authorList>
            <person name="Gillaspy A.F."/>
            <person name="Worrell V."/>
            <person name="Orvis J."/>
            <person name="Roe B.A."/>
            <person name="Dyer D.W."/>
            <person name="Iandolo J.J."/>
        </authorList>
    </citation>
    <scope>NUCLEOTIDE SEQUENCE [LARGE SCALE GENOMIC DNA]</scope>
    <source>
        <strain>NCTC 8325 / PS 47</strain>
    </source>
</reference>
<sequence>MKFDRHRRLRSSATMRDMVRENHVRKEDLIYPIFVVEKDDVKKEIKSLPGVYQISLNLLESELKEAYDLGIRAIMFFGVPNSKDDIGTGAYIHDGVIQQATRIAKKMYDDLLIVADTCLCEYTDHGHCGVIDDHTHDVDNDKSLPLLVKTAISQVEAGADIIAPSNMMDGFVAEIRRGLDEAGYYNIPIMSYGVKYASSFFGPFRDAADSAPSFGDRKTYQMDPANRLEALRELESDLKEGCDMMIVKPALSYLDIVRDVKNHTNVPVVAYNVSGEYSMTKAAAQNGWIDEERVVMEQMVSMKRAGADMIITYFAKDICRYLDK</sequence>
<keyword id="KW-0350">Heme biosynthesis</keyword>
<keyword id="KW-0456">Lyase</keyword>
<keyword id="KW-0460">Magnesium</keyword>
<keyword id="KW-0479">Metal-binding</keyword>
<keyword id="KW-0627">Porphyrin biosynthesis</keyword>
<keyword id="KW-1185">Reference proteome</keyword>
<keyword id="KW-0862">Zinc</keyword>
<protein>
    <recommendedName>
        <fullName>Delta-aminolevulinic acid dehydratase</fullName>
        <shortName>ALAD</shortName>
        <shortName>ALADH</shortName>
        <ecNumber>4.2.1.24</ecNumber>
    </recommendedName>
    <alternativeName>
        <fullName>Porphobilinogen synthase</fullName>
    </alternativeName>
</protein>
<accession>Q2FXR3</accession>
<accession>P50915</accession>
<evidence type="ECO:0000250" key="1"/>
<evidence type="ECO:0000305" key="2"/>
<dbReference type="EC" id="4.2.1.24"/>
<dbReference type="EMBL" id="U89396">
    <property type="protein sequence ID" value="AAC45835.1"/>
    <property type="molecule type" value="Genomic_DNA"/>
</dbReference>
<dbReference type="EMBL" id="CP000253">
    <property type="protein sequence ID" value="ABD30841.1"/>
    <property type="molecule type" value="Genomic_DNA"/>
</dbReference>
<dbReference type="RefSeq" id="WP_000667126.1">
    <property type="nucleotide sequence ID" value="NZ_LS483365.1"/>
</dbReference>
<dbReference type="RefSeq" id="YP_500277.1">
    <property type="nucleotide sequence ID" value="NC_007795.1"/>
</dbReference>
<dbReference type="SMR" id="Q2FXR3"/>
<dbReference type="STRING" id="93061.SAOUHSC_01772"/>
<dbReference type="PaxDb" id="1280-SAXN108_1695"/>
<dbReference type="GeneID" id="3919690"/>
<dbReference type="KEGG" id="sao:SAOUHSC_01772"/>
<dbReference type="PATRIC" id="fig|93061.5.peg.1616"/>
<dbReference type="eggNOG" id="COG0113">
    <property type="taxonomic scope" value="Bacteria"/>
</dbReference>
<dbReference type="HOGENOM" id="CLU_035731_0_0_9"/>
<dbReference type="OrthoDB" id="9805001at2"/>
<dbReference type="UniPathway" id="UPA00251">
    <property type="reaction ID" value="UER00318"/>
</dbReference>
<dbReference type="PRO" id="PR:Q2FXR3"/>
<dbReference type="Proteomes" id="UP000008816">
    <property type="component" value="Chromosome"/>
</dbReference>
<dbReference type="GO" id="GO:0005829">
    <property type="term" value="C:cytosol"/>
    <property type="evidence" value="ECO:0000318"/>
    <property type="project" value="GO_Central"/>
</dbReference>
<dbReference type="GO" id="GO:0004655">
    <property type="term" value="F:porphobilinogen synthase activity"/>
    <property type="evidence" value="ECO:0000318"/>
    <property type="project" value="GO_Central"/>
</dbReference>
<dbReference type="GO" id="GO:0008270">
    <property type="term" value="F:zinc ion binding"/>
    <property type="evidence" value="ECO:0000318"/>
    <property type="project" value="GO_Central"/>
</dbReference>
<dbReference type="GO" id="GO:0006783">
    <property type="term" value="P:heme biosynthetic process"/>
    <property type="evidence" value="ECO:0000318"/>
    <property type="project" value="GO_Central"/>
</dbReference>
<dbReference type="GO" id="GO:0006782">
    <property type="term" value="P:protoporphyrinogen IX biosynthetic process"/>
    <property type="evidence" value="ECO:0007669"/>
    <property type="project" value="UniProtKB-UniPathway"/>
</dbReference>
<dbReference type="CDD" id="cd00384">
    <property type="entry name" value="ALAD_PBGS"/>
    <property type="match status" value="1"/>
</dbReference>
<dbReference type="FunFam" id="3.20.20.70:FF:000019">
    <property type="entry name" value="Delta-aminolevulinic acid dehydratase"/>
    <property type="match status" value="1"/>
</dbReference>
<dbReference type="Gene3D" id="3.20.20.70">
    <property type="entry name" value="Aldolase class I"/>
    <property type="match status" value="1"/>
</dbReference>
<dbReference type="InterPro" id="IPR001731">
    <property type="entry name" value="ALAD"/>
</dbReference>
<dbReference type="InterPro" id="IPR030656">
    <property type="entry name" value="ALAD_AS"/>
</dbReference>
<dbReference type="InterPro" id="IPR013785">
    <property type="entry name" value="Aldolase_TIM"/>
</dbReference>
<dbReference type="NCBIfam" id="NF006762">
    <property type="entry name" value="PRK09283.1"/>
    <property type="match status" value="1"/>
</dbReference>
<dbReference type="PANTHER" id="PTHR11458">
    <property type="entry name" value="DELTA-AMINOLEVULINIC ACID DEHYDRATASE"/>
    <property type="match status" value="1"/>
</dbReference>
<dbReference type="PANTHER" id="PTHR11458:SF0">
    <property type="entry name" value="DELTA-AMINOLEVULINIC ACID DEHYDRATASE"/>
    <property type="match status" value="1"/>
</dbReference>
<dbReference type="Pfam" id="PF00490">
    <property type="entry name" value="ALAD"/>
    <property type="match status" value="1"/>
</dbReference>
<dbReference type="PIRSF" id="PIRSF001415">
    <property type="entry name" value="Porphbilin_synth"/>
    <property type="match status" value="1"/>
</dbReference>
<dbReference type="PRINTS" id="PR00144">
    <property type="entry name" value="DALDHYDRTASE"/>
</dbReference>
<dbReference type="SMART" id="SM01004">
    <property type="entry name" value="ALAD"/>
    <property type="match status" value="1"/>
</dbReference>
<dbReference type="SUPFAM" id="SSF51569">
    <property type="entry name" value="Aldolase"/>
    <property type="match status" value="1"/>
</dbReference>
<dbReference type="PROSITE" id="PS00169">
    <property type="entry name" value="D_ALA_DEHYDRATASE"/>
    <property type="match status" value="1"/>
</dbReference>
<comment type="function">
    <text evidence="1">Catalyzes an early step in the biosynthesis of tetrapyrroles. Binds two molecules of 5-aminolevulinate per subunit, each at a distinct site, and catalyzes their condensation to form porphobilinogen (By similarity).</text>
</comment>
<comment type="catalytic activity">
    <reaction>
        <text>2 5-aminolevulinate = porphobilinogen + 2 H2O + H(+)</text>
        <dbReference type="Rhea" id="RHEA:24064"/>
        <dbReference type="ChEBI" id="CHEBI:15377"/>
        <dbReference type="ChEBI" id="CHEBI:15378"/>
        <dbReference type="ChEBI" id="CHEBI:58126"/>
        <dbReference type="ChEBI" id="CHEBI:356416"/>
        <dbReference type="EC" id="4.2.1.24"/>
    </reaction>
</comment>
<comment type="cofactor">
    <cofactor evidence="1">
        <name>Zn(2+)</name>
        <dbReference type="ChEBI" id="CHEBI:29105"/>
    </cofactor>
    <text evidence="1">Binds 1 zinc ion per monomer.</text>
</comment>
<comment type="pathway">
    <text>Porphyrin-containing compound metabolism; protoporphyrin-IX biosynthesis; coproporphyrinogen-III from 5-aminolevulinate: step 1/4.</text>
</comment>
<comment type="subunit">
    <text evidence="1">Homooctamer.</text>
</comment>
<comment type="similarity">
    <text evidence="2">Belongs to the ALAD family.</text>
</comment>
<feature type="chain" id="PRO_0000247939" description="Delta-aminolevulinic acid dehydratase">
    <location>
        <begin position="1"/>
        <end position="323"/>
    </location>
</feature>
<feature type="active site" description="Schiff-base intermediate with substrate" evidence="1">
    <location>
        <position position="195"/>
    </location>
</feature>
<feature type="active site" description="Schiff-base intermediate with substrate" evidence="1">
    <location>
        <position position="248"/>
    </location>
</feature>
<feature type="binding site" evidence="1">
    <location>
        <position position="118"/>
    </location>
    <ligand>
        <name>Zn(2+)</name>
        <dbReference type="ChEBI" id="CHEBI:29105"/>
        <note>catalytic</note>
    </ligand>
</feature>
<feature type="binding site" evidence="1">
    <location>
        <position position="120"/>
    </location>
    <ligand>
        <name>Zn(2+)</name>
        <dbReference type="ChEBI" id="CHEBI:29105"/>
        <note>catalytic</note>
    </ligand>
</feature>
<feature type="binding site" evidence="1">
    <location>
        <position position="128"/>
    </location>
    <ligand>
        <name>Zn(2+)</name>
        <dbReference type="ChEBI" id="CHEBI:29105"/>
        <note>catalytic</note>
    </ligand>
</feature>
<feature type="binding site" evidence="1">
    <location>
        <position position="205"/>
    </location>
    <ligand>
        <name>5-aminolevulinate</name>
        <dbReference type="ChEBI" id="CHEBI:356416"/>
        <label>1</label>
    </ligand>
</feature>
<feature type="binding site" evidence="1">
    <location>
        <position position="217"/>
    </location>
    <ligand>
        <name>5-aminolevulinate</name>
        <dbReference type="ChEBI" id="CHEBI:356416"/>
        <label>1</label>
    </ligand>
</feature>
<feature type="binding site" evidence="1">
    <location>
        <position position="233"/>
    </location>
    <ligand>
        <name>Mg(2+)</name>
        <dbReference type="ChEBI" id="CHEBI:18420"/>
    </ligand>
</feature>
<feature type="binding site" evidence="1">
    <location>
        <position position="274"/>
    </location>
    <ligand>
        <name>5-aminolevulinate</name>
        <dbReference type="ChEBI" id="CHEBI:356416"/>
        <label>2</label>
    </ligand>
</feature>
<feature type="binding site" evidence="1">
    <location>
        <position position="313"/>
    </location>
    <ligand>
        <name>5-aminolevulinate</name>
        <dbReference type="ChEBI" id="CHEBI:356416"/>
        <label>2</label>
    </ligand>
</feature>
<feature type="sequence conflict" description="In Ref. 1; AAC45835." evidence="2" ref="1">
    <original>FA</original>
    <variation>C</variation>
    <location>
        <begin position="314"/>
        <end position="315"/>
    </location>
</feature>
<feature type="sequence conflict" description="In Ref. 1; AAC45835." evidence="2" ref="1">
    <original>K</original>
    <variation>N</variation>
    <location>
        <position position="324"/>
    </location>
</feature>
<name>HEM2_STAA8</name>
<organism>
    <name type="scientific">Staphylococcus aureus (strain NCTC 8325 / PS 47)</name>
    <dbReference type="NCBI Taxonomy" id="93061"/>
    <lineage>
        <taxon>Bacteria</taxon>
        <taxon>Bacillati</taxon>
        <taxon>Bacillota</taxon>
        <taxon>Bacilli</taxon>
        <taxon>Bacillales</taxon>
        <taxon>Staphylococcaceae</taxon>
        <taxon>Staphylococcus</taxon>
    </lineage>
</organism>